<comment type="subcellular location">
    <subcellularLocation>
        <location evidence="5">Membrane</location>
        <topology evidence="5">Single-pass type I membrane protein</topology>
    </subcellularLocation>
</comment>
<organism>
    <name type="scientific">Rattus norvegicus</name>
    <name type="common">Rat</name>
    <dbReference type="NCBI Taxonomy" id="10116"/>
    <lineage>
        <taxon>Eukaryota</taxon>
        <taxon>Metazoa</taxon>
        <taxon>Chordata</taxon>
        <taxon>Craniata</taxon>
        <taxon>Vertebrata</taxon>
        <taxon>Euteleostomi</taxon>
        <taxon>Mammalia</taxon>
        <taxon>Eutheria</taxon>
        <taxon>Euarchontoglires</taxon>
        <taxon>Glires</taxon>
        <taxon>Rodentia</taxon>
        <taxon>Myomorpha</taxon>
        <taxon>Muroidea</taxon>
        <taxon>Muridae</taxon>
        <taxon>Murinae</taxon>
        <taxon>Rattus</taxon>
    </lineage>
</organism>
<name>VSIG1_RAT</name>
<evidence type="ECO:0000250" key="1">
    <source>
        <dbReference type="UniProtKB" id="Q9D2J4"/>
    </source>
</evidence>
<evidence type="ECO:0000255" key="2"/>
<evidence type="ECO:0000255" key="3">
    <source>
        <dbReference type="PROSITE-ProRule" id="PRU00114"/>
    </source>
</evidence>
<evidence type="ECO:0000256" key="4">
    <source>
        <dbReference type="SAM" id="MobiDB-lite"/>
    </source>
</evidence>
<evidence type="ECO:0000305" key="5"/>
<evidence type="ECO:0007744" key="6">
    <source>
    </source>
</evidence>
<sequence length="404" mass="43938">MMVFAFWKVFLILNCLAGQVNMVQVTIPDTFVNVTVGSNVTLLCLYTTTVTSLEKLSIQWSFFHNKEMEPISIYYSEGGQASAIGQFKDRIIGATNPGNASITILHMQPADSGIYICDVNNPPDFFGKNQGILDVTVLVKPSKPFCSIQGRPEAGHPISLSCLSAFGTPSPVYYWYKIEGNTIVPVKESFNSATGVLDIGNLTNFEKGYYQCTAINSLGNSSCEIDLTSSDPEVGIIIGALVGALTGAAIIICVVYFARNKVKSKQKNLNSSTELEPMTKVHHSRQNEAIPAGGIQLEGTLPSSIHASHNTEPTTAVLEPEYEPNPPLETATQPDPEPEGSGPMPVPETEIQLQPEMELEPETEPEPEPEPEPQPELESELEPDPQSGVIVEPMREEEKETVKA</sequence>
<reference key="1">
    <citation type="journal article" date="2004" name="Genome Res.">
        <title>The status, quality, and expansion of the NIH full-length cDNA project: the Mammalian Gene Collection (MGC).</title>
        <authorList>
            <consortium name="The MGC Project Team"/>
        </authorList>
    </citation>
    <scope>NUCLEOTIDE SEQUENCE [LARGE SCALE MRNA]</scope>
    <source>
        <tissue>Testis</tissue>
    </source>
</reference>
<reference key="2">
    <citation type="journal article" date="2012" name="Nat. Commun.">
        <title>Quantitative maps of protein phosphorylation sites across 14 different rat organs and tissues.</title>
        <authorList>
            <person name="Lundby A."/>
            <person name="Secher A."/>
            <person name="Lage K."/>
            <person name="Nordsborg N.B."/>
            <person name="Dmytriyev A."/>
            <person name="Lundby C."/>
            <person name="Olsen J.V."/>
        </authorList>
    </citation>
    <scope>PHOSPHORYLATION [LARGE SCALE ANALYSIS] AT SER-272</scope>
    <scope>IDENTIFICATION BY MASS SPECTROMETRY [LARGE SCALE ANALYSIS]</scope>
</reference>
<protein>
    <recommendedName>
        <fullName>V-set and immunoglobulin domain-containing protein 1</fullName>
    </recommendedName>
</protein>
<accession>Q4KLY3</accession>
<proteinExistence type="evidence at protein level"/>
<feature type="signal peptide" evidence="2">
    <location>
        <begin position="1"/>
        <end position="22"/>
    </location>
</feature>
<feature type="chain" id="PRO_0000313575" description="V-set and immunoglobulin domain-containing protein 1">
    <location>
        <begin position="23"/>
        <end position="404"/>
    </location>
</feature>
<feature type="topological domain" description="Extracellular" evidence="2">
    <location>
        <begin position="23"/>
        <end position="233"/>
    </location>
</feature>
<feature type="transmembrane region" description="Helical" evidence="2">
    <location>
        <begin position="234"/>
        <end position="254"/>
    </location>
</feature>
<feature type="topological domain" description="Cytoplasmic" evidence="2">
    <location>
        <begin position="255"/>
        <end position="404"/>
    </location>
</feature>
<feature type="domain" description="Ig-like V-type">
    <location>
        <begin position="23"/>
        <end position="133"/>
    </location>
</feature>
<feature type="domain" description="Ig-like C2-type">
    <location>
        <begin position="141"/>
        <end position="228"/>
    </location>
</feature>
<feature type="region of interest" description="Disordered" evidence="4">
    <location>
        <begin position="266"/>
        <end position="285"/>
    </location>
</feature>
<feature type="region of interest" description="Disordered" evidence="4">
    <location>
        <begin position="298"/>
        <end position="404"/>
    </location>
</feature>
<feature type="compositionally biased region" description="Polar residues" evidence="4">
    <location>
        <begin position="301"/>
        <end position="314"/>
    </location>
</feature>
<feature type="compositionally biased region" description="Acidic residues" evidence="4">
    <location>
        <begin position="357"/>
        <end position="383"/>
    </location>
</feature>
<feature type="compositionally biased region" description="Basic and acidic residues" evidence="4">
    <location>
        <begin position="393"/>
        <end position="404"/>
    </location>
</feature>
<feature type="modified residue" description="Phosphoserine" evidence="1">
    <location>
        <position position="271"/>
    </location>
</feature>
<feature type="modified residue" description="Phosphoserine" evidence="6">
    <location>
        <position position="272"/>
    </location>
</feature>
<feature type="glycosylation site" description="N-linked (GlcNAc...) asparagine" evidence="2">
    <location>
        <position position="39"/>
    </location>
</feature>
<feature type="glycosylation site" description="N-linked (GlcNAc...) asparagine" evidence="2">
    <location>
        <position position="201"/>
    </location>
</feature>
<feature type="glycosylation site" description="N-linked (GlcNAc...) asparagine" evidence="2">
    <location>
        <position position="220"/>
    </location>
</feature>
<feature type="disulfide bond" evidence="3">
    <location>
        <begin position="44"/>
        <end position="117"/>
    </location>
</feature>
<feature type="disulfide bond" evidence="3">
    <location>
        <begin position="162"/>
        <end position="212"/>
    </location>
</feature>
<dbReference type="EMBL" id="BC098943">
    <property type="protein sequence ID" value="AAH98943.1"/>
    <property type="molecule type" value="mRNA"/>
</dbReference>
<dbReference type="RefSeq" id="NP_001032873.1">
    <property type="nucleotide sequence ID" value="NM_001037784.1"/>
</dbReference>
<dbReference type="RefSeq" id="XP_006234306.1">
    <property type="nucleotide sequence ID" value="XM_006234244.3"/>
</dbReference>
<dbReference type="SMR" id="Q4KLY3"/>
<dbReference type="FunCoup" id="Q4KLY3">
    <property type="interactions" value="106"/>
</dbReference>
<dbReference type="STRING" id="10116.ENSRNOP00000073037"/>
<dbReference type="GlyCosmos" id="Q4KLY3">
    <property type="glycosylation" value="3 sites, No reported glycans"/>
</dbReference>
<dbReference type="GlyGen" id="Q4KLY3">
    <property type="glycosylation" value="4 sites"/>
</dbReference>
<dbReference type="iPTMnet" id="Q4KLY3"/>
<dbReference type="PhosphoSitePlus" id="Q4KLY3"/>
<dbReference type="PaxDb" id="10116-ENSRNOP00000020974"/>
<dbReference type="Ensembl" id="ENSRNOT00000082652.2">
    <property type="protein sequence ID" value="ENSRNOP00000075185.1"/>
    <property type="gene ID" value="ENSRNOG00000054219.2"/>
</dbReference>
<dbReference type="GeneID" id="315920"/>
<dbReference type="KEGG" id="rno:315920"/>
<dbReference type="AGR" id="RGD:1565570"/>
<dbReference type="CTD" id="340547"/>
<dbReference type="RGD" id="1565570">
    <property type="gene designation" value="Vsig1"/>
</dbReference>
<dbReference type="eggNOG" id="ENOG502QU0R">
    <property type="taxonomic scope" value="Eukaryota"/>
</dbReference>
<dbReference type="GeneTree" id="ENSGT00940000160507"/>
<dbReference type="InParanoid" id="Q4KLY3"/>
<dbReference type="OrthoDB" id="190835at2759"/>
<dbReference type="PRO" id="PR:Q4KLY3"/>
<dbReference type="Proteomes" id="UP000002494">
    <property type="component" value="Chromosome X"/>
</dbReference>
<dbReference type="Bgee" id="ENSRNOG00000054219">
    <property type="expression patterns" value="Expressed in stomach and 10 other cell types or tissues"/>
</dbReference>
<dbReference type="ExpressionAtlas" id="Q4KLY3">
    <property type="expression patterns" value="baseline and differential"/>
</dbReference>
<dbReference type="GO" id="GO:0016323">
    <property type="term" value="C:basolateral plasma membrane"/>
    <property type="evidence" value="ECO:0000266"/>
    <property type="project" value="RGD"/>
</dbReference>
<dbReference type="GO" id="GO:0005886">
    <property type="term" value="C:plasma membrane"/>
    <property type="evidence" value="ECO:0000266"/>
    <property type="project" value="RGD"/>
</dbReference>
<dbReference type="GO" id="GO:0003382">
    <property type="term" value="P:epithelial cell morphogenesis"/>
    <property type="evidence" value="ECO:0000266"/>
    <property type="project" value="RGD"/>
</dbReference>
<dbReference type="GO" id="GO:0030277">
    <property type="term" value="P:maintenance of gastrointestinal epithelium"/>
    <property type="evidence" value="ECO:0000266"/>
    <property type="project" value="RGD"/>
</dbReference>
<dbReference type="FunFam" id="2.60.40.10:FF:000095">
    <property type="entry name" value="immunoglobulin superfamily member 11 isoform X1"/>
    <property type="match status" value="1"/>
</dbReference>
<dbReference type="FunFam" id="2.60.40.10:FF:000931">
    <property type="entry name" value="V-set and immunoglobulin domain containing 1"/>
    <property type="match status" value="1"/>
</dbReference>
<dbReference type="Gene3D" id="2.60.40.10">
    <property type="entry name" value="Immunoglobulins"/>
    <property type="match status" value="2"/>
</dbReference>
<dbReference type="InterPro" id="IPR007110">
    <property type="entry name" value="Ig-like_dom"/>
</dbReference>
<dbReference type="InterPro" id="IPR036179">
    <property type="entry name" value="Ig-like_dom_sf"/>
</dbReference>
<dbReference type="InterPro" id="IPR013783">
    <property type="entry name" value="Ig-like_fold"/>
</dbReference>
<dbReference type="InterPro" id="IPR003599">
    <property type="entry name" value="Ig_sub"/>
</dbReference>
<dbReference type="InterPro" id="IPR003598">
    <property type="entry name" value="Ig_sub2"/>
</dbReference>
<dbReference type="InterPro" id="IPR013106">
    <property type="entry name" value="Ig_V-set"/>
</dbReference>
<dbReference type="InterPro" id="IPR000920">
    <property type="entry name" value="Myelin_P0-rel"/>
</dbReference>
<dbReference type="InterPro" id="IPR029861">
    <property type="entry name" value="VSIG1"/>
</dbReference>
<dbReference type="PANTHER" id="PTHR44974">
    <property type="entry name" value="V-SET AND IMMUNOGLOBULIN DOMAIN-CONTAINING PROTEIN 1"/>
    <property type="match status" value="1"/>
</dbReference>
<dbReference type="PANTHER" id="PTHR44974:SF1">
    <property type="entry name" value="V-SET AND IMMUNOGLOBULIN DOMAIN-CONTAINING PROTEIN 1"/>
    <property type="match status" value="1"/>
</dbReference>
<dbReference type="Pfam" id="PF13927">
    <property type="entry name" value="Ig_3"/>
    <property type="match status" value="1"/>
</dbReference>
<dbReference type="Pfam" id="PF07686">
    <property type="entry name" value="V-set"/>
    <property type="match status" value="1"/>
</dbReference>
<dbReference type="PRINTS" id="PR00213">
    <property type="entry name" value="MYELINP0"/>
</dbReference>
<dbReference type="SMART" id="SM00409">
    <property type="entry name" value="IG"/>
    <property type="match status" value="2"/>
</dbReference>
<dbReference type="SMART" id="SM00408">
    <property type="entry name" value="IGc2"/>
    <property type="match status" value="2"/>
</dbReference>
<dbReference type="SUPFAM" id="SSF48726">
    <property type="entry name" value="Immunoglobulin"/>
    <property type="match status" value="2"/>
</dbReference>
<dbReference type="PROSITE" id="PS50835">
    <property type="entry name" value="IG_LIKE"/>
    <property type="match status" value="2"/>
</dbReference>
<gene>
    <name type="primary">Vsig1</name>
</gene>
<keyword id="KW-1015">Disulfide bond</keyword>
<keyword id="KW-0325">Glycoprotein</keyword>
<keyword id="KW-0393">Immunoglobulin domain</keyword>
<keyword id="KW-0472">Membrane</keyword>
<keyword id="KW-0597">Phosphoprotein</keyword>
<keyword id="KW-1185">Reference proteome</keyword>
<keyword id="KW-0677">Repeat</keyword>
<keyword id="KW-0732">Signal</keyword>
<keyword id="KW-0812">Transmembrane</keyword>
<keyword id="KW-1133">Transmembrane helix</keyword>